<dbReference type="EMBL" id="CP002618">
    <property type="protein sequence ID" value="AEA56526.1"/>
    <property type="molecule type" value="Genomic_DNA"/>
</dbReference>
<dbReference type="SMR" id="F2MHZ2"/>
<dbReference type="KEGG" id="lcs:LCBD_1028"/>
<dbReference type="PATRIC" id="fig|998820.3.peg.1000"/>
<dbReference type="HOGENOM" id="CLU_051142_1_0_9"/>
<dbReference type="GO" id="GO:0005886">
    <property type="term" value="C:plasma membrane"/>
    <property type="evidence" value="ECO:0007669"/>
    <property type="project" value="UniProtKB-SubCell"/>
</dbReference>
<dbReference type="GO" id="GO:0000917">
    <property type="term" value="P:division septum assembly"/>
    <property type="evidence" value="ECO:0007669"/>
    <property type="project" value="UniProtKB-KW"/>
</dbReference>
<dbReference type="Gene3D" id="2.30.42.10">
    <property type="match status" value="1"/>
</dbReference>
<dbReference type="InterPro" id="IPR001478">
    <property type="entry name" value="PDZ"/>
</dbReference>
<dbReference type="InterPro" id="IPR041489">
    <property type="entry name" value="PDZ_6"/>
</dbReference>
<dbReference type="InterPro" id="IPR036034">
    <property type="entry name" value="PDZ_sf"/>
</dbReference>
<dbReference type="Pfam" id="PF17820">
    <property type="entry name" value="PDZ_6"/>
    <property type="match status" value="1"/>
</dbReference>
<dbReference type="SMART" id="SM00228">
    <property type="entry name" value="PDZ"/>
    <property type="match status" value="1"/>
</dbReference>
<dbReference type="SUPFAM" id="SSF50156">
    <property type="entry name" value="PDZ domain-like"/>
    <property type="match status" value="1"/>
</dbReference>
<proteinExistence type="inferred from homology"/>
<reference key="1">
    <citation type="journal article" date="2011" name="J. Bacteriol.">
        <title>Complete genome sequence of the probiotic strain Lactobacillus casei BD-II.</title>
        <authorList>
            <person name="Ai L."/>
            <person name="Chen C."/>
            <person name="Zhou F."/>
            <person name="Wang L."/>
            <person name="Zhang H."/>
            <person name="Chen W."/>
            <person name="Guo B."/>
        </authorList>
    </citation>
    <scope>NUCLEOTIDE SEQUENCE [LARGE SCALE GENOMIC DNA]</scope>
    <source>
        <strain>BD-II</strain>
    </source>
</reference>
<organism>
    <name type="scientific">Lacticaseibacillus casei (strain BD-II)</name>
    <name type="common">Lactobacillus casei</name>
    <dbReference type="NCBI Taxonomy" id="998820"/>
    <lineage>
        <taxon>Bacteria</taxon>
        <taxon>Bacillati</taxon>
        <taxon>Bacillota</taxon>
        <taxon>Bacilli</taxon>
        <taxon>Lactobacillales</taxon>
        <taxon>Lactobacillaceae</taxon>
        <taxon>Lacticaseibacillus</taxon>
    </lineage>
</organism>
<evidence type="ECO:0000250" key="1"/>
<evidence type="ECO:0000255" key="2"/>
<evidence type="ECO:0000305" key="3"/>
<comment type="function">
    <text evidence="1">The main function of the Min system is to promote the disassembly of the cytokinetic ring after cell division, thereby ensuring that division occurs only once per cell cycle. MinJ acts as a bridge between DivIVA and MinD. May modulate activity and localization of MinD and MinC through direct interaction with MinD (By similarity).</text>
</comment>
<comment type="subcellular location">
    <subcellularLocation>
        <location evidence="1">Cell membrane</location>
        <topology evidence="1">Multi-pass membrane protein</topology>
    </subcellularLocation>
</comment>
<comment type="similarity">
    <text evidence="3">Belongs to the MinJ family.</text>
</comment>
<name>MINJ_LACCD</name>
<feature type="chain" id="PRO_0000413092" description="Probable cell division topological determinant MinJ">
    <location>
        <begin position="1"/>
        <end position="367"/>
    </location>
</feature>
<feature type="transmembrane region" description="Helical" evidence="2">
    <location>
        <begin position="2"/>
        <end position="22"/>
    </location>
</feature>
<feature type="transmembrane region" description="Helical" evidence="2">
    <location>
        <begin position="49"/>
        <end position="69"/>
    </location>
</feature>
<feature type="transmembrane region" description="Helical" evidence="2">
    <location>
        <begin position="72"/>
        <end position="92"/>
    </location>
</feature>
<feature type="transmembrane region" description="Helical" evidence="2">
    <location>
        <begin position="97"/>
        <end position="117"/>
    </location>
</feature>
<feature type="transmembrane region" description="Helical" evidence="2">
    <location>
        <begin position="119"/>
        <end position="139"/>
    </location>
</feature>
<feature type="transmembrane region" description="Helical" evidence="2">
    <location>
        <begin position="186"/>
        <end position="206"/>
    </location>
</feature>
<feature type="transmembrane region" description="Helical" evidence="2">
    <location>
        <begin position="226"/>
        <end position="246"/>
    </location>
</feature>
<feature type="transmembrane region" description="Helical" evidence="2">
    <location>
        <begin position="248"/>
        <end position="268"/>
    </location>
</feature>
<feature type="domain" description="PDZ">
    <location>
        <begin position="261"/>
        <end position="339"/>
    </location>
</feature>
<sequence length="367" mass="40349">MAVVVALLINPVGLVFWLALGLTIWFAVNRTDRERRRYLRAIHPKHPEIGRFFWIGLVVGALVSLVMVIGRLQISLAALLALSGLTLVALLFSKWRFSPWWLGLASLAAVGQSGLLAEQHAANLAILVGLLWLTQAGLARFNRGDEIESPVIQQDRRQRQSAAFELRQLFWVPLILPVAVENVSNLPLLAVTVQSLTFVGLPLLLGATFMTPRDRAQTAWRRSWPWYGGAGGVLIVYGIVARTMTLPLLVSLVFPAVVSLVLVGGFIWQGRQVHLTVTLADQGVVLIGVVPHTPAAEMGLQPGDRVLACNHHSVNNSRELYDAIQKEPTYCRLRLRQADGELRLAETAIFAGAPHELGMILFPEETA</sequence>
<keyword id="KW-0131">Cell cycle</keyword>
<keyword id="KW-0132">Cell division</keyword>
<keyword id="KW-1003">Cell membrane</keyword>
<keyword id="KW-0472">Membrane</keyword>
<keyword id="KW-0717">Septation</keyword>
<keyword id="KW-0812">Transmembrane</keyword>
<keyword id="KW-1133">Transmembrane helix</keyword>
<gene>
    <name type="primary">minJ</name>
    <name type="synonym">yvjD</name>
    <name type="ordered locus">LCBD_1028</name>
</gene>
<accession>F2MHZ2</accession>
<protein>
    <recommendedName>
        <fullName>Probable cell division topological determinant MinJ</fullName>
    </recommendedName>
</protein>